<sequence>MDLVYGLVWLLTVLLEGISGQGVYAPPTVRIVHSGLACNIEEERYSERVYTIREGETLELTCLVTGHPRPQIRWTKTAGSASDRFQDSSVFNETLRITNIQRHQGGRYYCKAENGLGSPAIKSIRVDVYYLDDPVVTVHQSIGEAKEQFYYERTVFLRCVANSNPPVRYSWRRGQEVLLQGSDKGVEIYEPFFTQGETKILKLKNLRPQDYANYSCIASVRNVCNIPDKMVSFRLSNKTASPSIKLLVDDPIVVNPGEAITLVCVTTGGEPTPSLTWVRSFGTLPEKIVLNGGTLTIPAITSDDAGTYSCIANNNVGNPAKKSTNIIVRALKKGRFWITPDPYHKDDNIQIGREVKISCQVEAVPSEELTFSWFKNGRPLRSSERMVITQTDPDVSPGTTNLDIIDLKFTDFGTYTCVASLKGGGISDISIDVNISSSTVPPNLTVPQEKSPLVTREGDTIELQCQVTGKPKPIILWSRADKEVAMPDGTMQMESYDGTLRIVNVSREMSGMYRCQTSQYNGFNVKPREALVQLIVQYPPAVEPAFLEIRQGQDRSVTMSCRVLRAYPIRVLTYEWRLGNKLLRTGQFDSQEYTEYPLKSLSNENYGVYNCSIINEAGAGRCSFLVTGKAYAPEFYYDTYNPVWQNRHRVYSYSLQWTQMNPDAVDRIVAYRLGIRQAGQQRWWEQEIKINGNIQKGELITYNLTELIKPEAYEVRLTPLTKFGEGDSTIRVIKYTGEFHCGFEDGNICLFTQDDTDNFDWTKQSTATRNTKYTPNTGPSADRSGSKEGFYMYIETSRPRLEGEKARLLSPVFSIAPKNPYGPTNSAYCFSFFYHMYGQHIGVLNVYLRLKGQTTIENPLWSSSGNKGQRWNEAHVNIYPITSFQLIFEGIRGPGIEGDIAIDDVSIAEGECAKQDLPTKNSVDGAVGILVHIWLFPVIILISILSPRR</sequence>
<feature type="signal peptide" evidence="2">
    <location>
        <begin position="1"/>
        <end position="25"/>
    </location>
</feature>
<feature type="chain" id="PRO_0000014860" description="MAM domain-containing glycosylphosphatidylinositol anchor protein 2">
    <location>
        <begin position="26"/>
        <end position="924"/>
    </location>
</feature>
<feature type="propeptide" id="PRO_0000292044" description="Removed in mature form" evidence="2">
    <location>
        <begin position="925"/>
        <end position="949"/>
    </location>
</feature>
<feature type="domain" description="Ig-like 1">
    <location>
        <begin position="27"/>
        <end position="127"/>
    </location>
</feature>
<feature type="domain" description="Ig-like 2">
    <location>
        <begin position="134"/>
        <end position="232"/>
    </location>
</feature>
<feature type="domain" description="Ig-like 3">
    <location>
        <begin position="242"/>
        <end position="328"/>
    </location>
</feature>
<feature type="domain" description="Ig-like 4">
    <location>
        <begin position="340"/>
        <end position="436"/>
    </location>
</feature>
<feature type="domain" description="Ig-like 5">
    <location>
        <begin position="442"/>
        <end position="533"/>
    </location>
</feature>
<feature type="domain" description="Ig-like 6">
    <location>
        <begin position="540"/>
        <end position="627"/>
    </location>
</feature>
<feature type="domain" description="Fibronectin type-III" evidence="5">
    <location>
        <begin position="638"/>
        <end position="738"/>
    </location>
</feature>
<feature type="domain" description="MAM" evidence="4">
    <location>
        <begin position="739"/>
        <end position="914"/>
    </location>
</feature>
<feature type="lipid moiety-binding region" description="GPI-anchor amidated aspartate" evidence="2">
    <location>
        <position position="924"/>
    </location>
</feature>
<feature type="glycosylation site" description="N-linked (GlcNAc...) asparagine" evidence="2">
    <location>
        <position position="92"/>
    </location>
</feature>
<feature type="glycosylation site" description="N-linked (GlcNAc...) asparagine" evidence="2">
    <location>
        <position position="213"/>
    </location>
</feature>
<feature type="glycosylation site" description="N-linked (GlcNAc...) asparagine" evidence="2">
    <location>
        <position position="237"/>
    </location>
</feature>
<feature type="glycosylation site" description="N-linked (GlcNAc...) asparagine" evidence="2">
    <location>
        <position position="434"/>
    </location>
</feature>
<feature type="glycosylation site" description="N-linked (GlcNAc...) asparagine" evidence="2">
    <location>
        <position position="443"/>
    </location>
</feature>
<feature type="glycosylation site" description="N-linked (GlcNAc...) asparagine" evidence="2">
    <location>
        <position position="504"/>
    </location>
</feature>
<feature type="glycosylation site" description="N-linked (GlcNAc...) asparagine" evidence="2">
    <location>
        <position position="610"/>
    </location>
</feature>
<feature type="glycosylation site" description="N-linked (GlcNAc...) asparagine" evidence="2">
    <location>
        <position position="703"/>
    </location>
</feature>
<feature type="disulfide bond" evidence="3">
    <location>
        <begin position="62"/>
        <end position="110"/>
    </location>
</feature>
<feature type="disulfide bond" evidence="3">
    <location>
        <begin position="159"/>
        <end position="216"/>
    </location>
</feature>
<feature type="disulfide bond" evidence="3">
    <location>
        <begin position="264"/>
        <end position="310"/>
    </location>
</feature>
<feature type="disulfide bond" evidence="3">
    <location>
        <begin position="359"/>
        <end position="417"/>
    </location>
</feature>
<feature type="disulfide bond" evidence="3">
    <location>
        <begin position="465"/>
        <end position="515"/>
    </location>
</feature>
<feature type="disulfide bond" evidence="3">
    <location>
        <begin position="561"/>
        <end position="611"/>
    </location>
</feature>
<organism>
    <name type="scientific">Mus musculus</name>
    <name type="common">Mouse</name>
    <dbReference type="NCBI Taxonomy" id="10090"/>
    <lineage>
        <taxon>Eukaryota</taxon>
        <taxon>Metazoa</taxon>
        <taxon>Chordata</taxon>
        <taxon>Craniata</taxon>
        <taxon>Vertebrata</taxon>
        <taxon>Euteleostomi</taxon>
        <taxon>Mammalia</taxon>
        <taxon>Eutheria</taxon>
        <taxon>Euarchontoglires</taxon>
        <taxon>Glires</taxon>
        <taxon>Rodentia</taxon>
        <taxon>Myomorpha</taxon>
        <taxon>Muroidea</taxon>
        <taxon>Muridae</taxon>
        <taxon>Murinae</taxon>
        <taxon>Mus</taxon>
        <taxon>Mus</taxon>
    </lineage>
</organism>
<reference key="1">
    <citation type="submission" date="2003-08" db="EMBL/GenBank/DDBJ databases">
        <authorList>
            <person name="Huang C.Q."/>
            <person name="Wu S.L."/>
            <person name="Liu S."/>
        </authorList>
    </citation>
    <scope>NUCLEOTIDE SEQUENCE [MRNA]</scope>
    <source>
        <strain>CD-1</strain>
    </source>
</reference>
<reference key="2">
    <citation type="journal article" date="2010" name="Cell">
        <title>A tissue-specific atlas of mouse protein phosphorylation and expression.</title>
        <authorList>
            <person name="Huttlin E.L."/>
            <person name="Jedrychowski M.P."/>
            <person name="Elias J.E."/>
            <person name="Goswami T."/>
            <person name="Rad R."/>
            <person name="Beausoleil S.A."/>
            <person name="Villen J."/>
            <person name="Haas W."/>
            <person name="Sowa M.E."/>
            <person name="Gygi S.P."/>
        </authorList>
    </citation>
    <scope>IDENTIFICATION BY MASS SPECTROMETRY [LARGE SCALE ANALYSIS]</scope>
    <source>
        <tissue>Brain</tissue>
    </source>
</reference>
<reference key="3">
    <citation type="journal article" date="2013" name="J. Cell Biol.">
        <title>Interaction between autism-linked MDGAs and neuroligins suppresses inhibitory synapse development.</title>
        <authorList>
            <person name="Pettem K.L."/>
            <person name="Yokomaku D."/>
            <person name="Takahashi H."/>
            <person name="Ge Y."/>
            <person name="Craig A.M."/>
        </authorList>
    </citation>
    <scope>INTERACTION WITH NLGN2</scope>
</reference>
<reference key="4">
    <citation type="journal article" date="2013" name="Proc. Natl. Acad. Sci. U.S.A.">
        <title>MDGAs interact selectively with neuroligin-2 but not other neuroligins to regulate inhibitory synapse development.</title>
        <authorList>
            <person name="Lee K."/>
            <person name="Kim Y."/>
            <person name="Lee S.-J."/>
            <person name="Qiang Y."/>
            <person name="Lee D."/>
            <person name="Lee H.W."/>
            <person name="Kim H."/>
            <person name="Je H.S."/>
            <person name="Suedhof T.C."/>
            <person name="Ko J."/>
        </authorList>
    </citation>
    <scope>INTERACTION WITH NLGN2</scope>
</reference>
<dbReference type="EMBL" id="AY371925">
    <property type="protein sequence ID" value="AAQ75751.1"/>
    <property type="molecule type" value="mRNA"/>
</dbReference>
<dbReference type="CCDS" id="CCDS25945.1"/>
<dbReference type="RefSeq" id="NP_996893.3">
    <property type="nucleotide sequence ID" value="NM_207010.2"/>
</dbReference>
<dbReference type="SMR" id="P60755"/>
<dbReference type="FunCoup" id="P60755">
    <property type="interactions" value="187"/>
</dbReference>
<dbReference type="STRING" id="10090.ENSMUSP00000152112"/>
<dbReference type="GlyConnect" id="2501">
    <property type="glycosylation" value="4 N-Linked glycans (3 sites)"/>
</dbReference>
<dbReference type="GlyCosmos" id="P60755">
    <property type="glycosylation" value="8 sites, 4 glycans"/>
</dbReference>
<dbReference type="GlyGen" id="P60755">
    <property type="glycosylation" value="10 sites, 8 N-linked glycans (5 sites), 1 O-linked glycan (1 site)"/>
</dbReference>
<dbReference type="iPTMnet" id="P60755"/>
<dbReference type="PhosphoSitePlus" id="P60755"/>
<dbReference type="SwissPalm" id="P60755"/>
<dbReference type="jPOST" id="P60755"/>
<dbReference type="PaxDb" id="10090-ENSMUSP00000137608"/>
<dbReference type="ProteomicsDB" id="293446"/>
<dbReference type="Antibodypedia" id="162">
    <property type="antibodies" value="93 antibodies from 17 providers"/>
</dbReference>
<dbReference type="DNASU" id="320772"/>
<dbReference type="Ensembl" id="ENSMUST00000223141.2">
    <property type="protein sequence ID" value="ENSMUSP00000152613.2"/>
    <property type="gene ID" value="ENSMUSG00000034912.19"/>
</dbReference>
<dbReference type="GeneID" id="320772"/>
<dbReference type="KEGG" id="mmu:320772"/>
<dbReference type="UCSC" id="uc007nrl.3">
    <property type="organism name" value="mouse"/>
</dbReference>
<dbReference type="AGR" id="MGI:2444706"/>
<dbReference type="CTD" id="161357"/>
<dbReference type="MGI" id="MGI:2444706">
    <property type="gene designation" value="Mdga2"/>
</dbReference>
<dbReference type="VEuPathDB" id="HostDB:ENSMUSG00000034912"/>
<dbReference type="eggNOG" id="ENOG502QSMD">
    <property type="taxonomic scope" value="Eukaryota"/>
</dbReference>
<dbReference type="GeneTree" id="ENSGT00940000155369"/>
<dbReference type="HOGENOM" id="CLU_014908_0_0_1"/>
<dbReference type="InParanoid" id="P60755"/>
<dbReference type="OMA" id="TGQFDAQ"/>
<dbReference type="OrthoDB" id="6107927at2759"/>
<dbReference type="PhylomeDB" id="P60755"/>
<dbReference type="BioGRID-ORCS" id="320772">
    <property type="hits" value="1 hit in 72 CRISPR screens"/>
</dbReference>
<dbReference type="ChiTaRS" id="Mdga2">
    <property type="organism name" value="mouse"/>
</dbReference>
<dbReference type="PRO" id="PR:P60755"/>
<dbReference type="Proteomes" id="UP000000589">
    <property type="component" value="Chromosome 12"/>
</dbReference>
<dbReference type="RNAct" id="P60755">
    <property type="molecule type" value="protein"/>
</dbReference>
<dbReference type="Bgee" id="ENSMUSG00000034912">
    <property type="expression patterns" value="Expressed in lateral septal nucleus and 96 other cell types or tissues"/>
</dbReference>
<dbReference type="ExpressionAtlas" id="P60755">
    <property type="expression patterns" value="baseline and differential"/>
</dbReference>
<dbReference type="GO" id="GO:0098982">
    <property type="term" value="C:GABA-ergic synapse"/>
    <property type="evidence" value="ECO:0000314"/>
    <property type="project" value="SynGO"/>
</dbReference>
<dbReference type="GO" id="GO:0098978">
    <property type="term" value="C:glutamatergic synapse"/>
    <property type="evidence" value="ECO:0000314"/>
    <property type="project" value="SynGO"/>
</dbReference>
<dbReference type="GO" id="GO:0005886">
    <property type="term" value="C:plasma membrane"/>
    <property type="evidence" value="ECO:0007669"/>
    <property type="project" value="UniProtKB-SubCell"/>
</dbReference>
<dbReference type="GO" id="GO:0098552">
    <property type="term" value="C:side of membrane"/>
    <property type="evidence" value="ECO:0007669"/>
    <property type="project" value="UniProtKB-KW"/>
</dbReference>
<dbReference type="GO" id="GO:0010467">
    <property type="term" value="P:gene expression"/>
    <property type="evidence" value="ECO:0000315"/>
    <property type="project" value="MGI"/>
</dbReference>
<dbReference type="GO" id="GO:0061744">
    <property type="term" value="P:motor behavior"/>
    <property type="evidence" value="ECO:0000315"/>
    <property type="project" value="MGI"/>
</dbReference>
<dbReference type="GO" id="GO:0043524">
    <property type="term" value="P:negative regulation of neuron apoptotic process"/>
    <property type="evidence" value="ECO:0000315"/>
    <property type="project" value="MGI"/>
</dbReference>
<dbReference type="GO" id="GO:0050905">
    <property type="term" value="P:neuromuscular process"/>
    <property type="evidence" value="ECO:0000315"/>
    <property type="project" value="MGI"/>
</dbReference>
<dbReference type="GO" id="GO:0001764">
    <property type="term" value="P:neuron migration"/>
    <property type="evidence" value="ECO:0000314"/>
    <property type="project" value="MGI"/>
</dbReference>
<dbReference type="GO" id="GO:0007389">
    <property type="term" value="P:pattern specification process"/>
    <property type="evidence" value="ECO:0000315"/>
    <property type="project" value="MGI"/>
</dbReference>
<dbReference type="GO" id="GO:1905606">
    <property type="term" value="P:regulation of presynapse assembly"/>
    <property type="evidence" value="ECO:0000314"/>
    <property type="project" value="SynGO"/>
</dbReference>
<dbReference type="GO" id="GO:0099179">
    <property type="term" value="P:regulation of synaptic membrane adhesion"/>
    <property type="evidence" value="ECO:0000314"/>
    <property type="project" value="SynGO"/>
</dbReference>
<dbReference type="CDD" id="cd00096">
    <property type="entry name" value="Ig"/>
    <property type="match status" value="2"/>
</dbReference>
<dbReference type="CDD" id="cd06263">
    <property type="entry name" value="MAM"/>
    <property type="match status" value="1"/>
</dbReference>
<dbReference type="FunFam" id="2.60.40.10:FF:000240">
    <property type="entry name" value="MAM domain containing glycosylphosphatidylinositol anchor 1"/>
    <property type="match status" value="1"/>
</dbReference>
<dbReference type="FunFam" id="2.60.40.10:FF:000262">
    <property type="entry name" value="MAM domain containing glycosylphosphatidylinositol anchor 1"/>
    <property type="match status" value="1"/>
</dbReference>
<dbReference type="FunFam" id="2.60.40.10:FF:000303">
    <property type="entry name" value="MAM domain containing glycosylphosphatidylinositol anchor 1"/>
    <property type="match status" value="1"/>
</dbReference>
<dbReference type="FunFam" id="2.60.120.200:FF:000019">
    <property type="entry name" value="MAM domain containing glycosylphosphatidylinositol anchor 2"/>
    <property type="match status" value="1"/>
</dbReference>
<dbReference type="FunFam" id="2.60.40.10:FF:000165">
    <property type="entry name" value="MAM domain containing glycosylphosphatidylinositol anchor 2"/>
    <property type="match status" value="1"/>
</dbReference>
<dbReference type="FunFam" id="2.60.40.10:FF:000654">
    <property type="entry name" value="MAM domain containing glycosylphosphatidylinositol anchor 2"/>
    <property type="match status" value="1"/>
</dbReference>
<dbReference type="FunFam" id="2.60.40.10:FF:000243">
    <property type="entry name" value="MAM domain-containing glycosylphosphatidylinositol anchor protein 1"/>
    <property type="match status" value="1"/>
</dbReference>
<dbReference type="Gene3D" id="2.60.120.200">
    <property type="match status" value="1"/>
</dbReference>
<dbReference type="Gene3D" id="2.60.40.10">
    <property type="entry name" value="Immunoglobulins"/>
    <property type="match status" value="7"/>
</dbReference>
<dbReference type="InterPro" id="IPR050958">
    <property type="entry name" value="Cell_Adh-Cytoskel_Orgn"/>
</dbReference>
<dbReference type="InterPro" id="IPR013320">
    <property type="entry name" value="ConA-like_dom_sf"/>
</dbReference>
<dbReference type="InterPro" id="IPR003961">
    <property type="entry name" value="FN3_dom"/>
</dbReference>
<dbReference type="InterPro" id="IPR036116">
    <property type="entry name" value="FN3_sf"/>
</dbReference>
<dbReference type="InterPro" id="IPR007110">
    <property type="entry name" value="Ig-like_dom"/>
</dbReference>
<dbReference type="InterPro" id="IPR036179">
    <property type="entry name" value="Ig-like_dom_sf"/>
</dbReference>
<dbReference type="InterPro" id="IPR013783">
    <property type="entry name" value="Ig-like_fold"/>
</dbReference>
<dbReference type="InterPro" id="IPR013098">
    <property type="entry name" value="Ig_I-set"/>
</dbReference>
<dbReference type="InterPro" id="IPR003599">
    <property type="entry name" value="Ig_sub"/>
</dbReference>
<dbReference type="InterPro" id="IPR003598">
    <property type="entry name" value="Ig_sub2"/>
</dbReference>
<dbReference type="InterPro" id="IPR000998">
    <property type="entry name" value="MAM_dom"/>
</dbReference>
<dbReference type="PANTHER" id="PTHR45080">
    <property type="entry name" value="CONTACTIN 5"/>
    <property type="match status" value="1"/>
</dbReference>
<dbReference type="PANTHER" id="PTHR45080:SF35">
    <property type="entry name" value="MAM DOMAIN-CONTAINING GLYCOSYLPHOSPHATIDYLINOSITOL ANCHOR 2"/>
    <property type="match status" value="1"/>
</dbReference>
<dbReference type="Pfam" id="PF07679">
    <property type="entry name" value="I-set"/>
    <property type="match status" value="1"/>
</dbReference>
<dbReference type="Pfam" id="PF13927">
    <property type="entry name" value="Ig_3"/>
    <property type="match status" value="4"/>
</dbReference>
<dbReference type="Pfam" id="PF00629">
    <property type="entry name" value="MAM"/>
    <property type="match status" value="1"/>
</dbReference>
<dbReference type="SMART" id="SM00409">
    <property type="entry name" value="IG"/>
    <property type="match status" value="6"/>
</dbReference>
<dbReference type="SMART" id="SM00408">
    <property type="entry name" value="IGc2"/>
    <property type="match status" value="6"/>
</dbReference>
<dbReference type="SMART" id="SM00137">
    <property type="entry name" value="MAM"/>
    <property type="match status" value="1"/>
</dbReference>
<dbReference type="SUPFAM" id="SSF49899">
    <property type="entry name" value="Concanavalin A-like lectins/glucanases"/>
    <property type="match status" value="1"/>
</dbReference>
<dbReference type="SUPFAM" id="SSF49265">
    <property type="entry name" value="Fibronectin type III"/>
    <property type="match status" value="1"/>
</dbReference>
<dbReference type="SUPFAM" id="SSF48726">
    <property type="entry name" value="Immunoglobulin"/>
    <property type="match status" value="6"/>
</dbReference>
<dbReference type="PROSITE" id="PS50853">
    <property type="entry name" value="FN3"/>
    <property type="match status" value="1"/>
</dbReference>
<dbReference type="PROSITE" id="PS50835">
    <property type="entry name" value="IG_LIKE"/>
    <property type="match status" value="6"/>
</dbReference>
<dbReference type="PROSITE" id="PS50060">
    <property type="entry name" value="MAM_2"/>
    <property type="match status" value="1"/>
</dbReference>
<protein>
    <recommendedName>
        <fullName>MAM domain-containing glycosylphosphatidylinositol anchor protein 2</fullName>
    </recommendedName>
    <alternativeName>
        <fullName>MAM domain-containing protein 1</fullName>
    </alternativeName>
</protein>
<gene>
    <name type="primary">Mdga2</name>
    <name type="synonym">Mamdc1</name>
</gene>
<keyword id="KW-1003">Cell membrane</keyword>
<keyword id="KW-1015">Disulfide bond</keyword>
<keyword id="KW-0325">Glycoprotein</keyword>
<keyword id="KW-0336">GPI-anchor</keyword>
<keyword id="KW-0393">Immunoglobulin domain</keyword>
<keyword id="KW-0449">Lipoprotein</keyword>
<keyword id="KW-0472">Membrane</keyword>
<keyword id="KW-1185">Reference proteome</keyword>
<keyword id="KW-0677">Repeat</keyword>
<keyword id="KW-0732">Signal</keyword>
<name>MDGA2_MOUSE</name>
<proteinExistence type="evidence at protein level"/>
<evidence type="ECO:0000250" key="1"/>
<evidence type="ECO:0000255" key="2"/>
<evidence type="ECO:0000255" key="3">
    <source>
        <dbReference type="PROSITE-ProRule" id="PRU00114"/>
    </source>
</evidence>
<evidence type="ECO:0000255" key="4">
    <source>
        <dbReference type="PROSITE-ProRule" id="PRU00128"/>
    </source>
</evidence>
<evidence type="ECO:0000255" key="5">
    <source>
        <dbReference type="PROSITE-ProRule" id="PRU00316"/>
    </source>
</evidence>
<evidence type="ECO:0000269" key="6">
    <source>
    </source>
</evidence>
<evidence type="ECO:0000269" key="7">
    <source>
    </source>
</evidence>
<evidence type="ECO:0000305" key="8"/>
<accession>P60755</accession>
<comment type="function">
    <text evidence="1">May be involved in cell-cell interactions.</text>
</comment>
<comment type="subunit">
    <text evidence="6 7">Interacts (through the Ig-like domains) with NLGN2.</text>
</comment>
<comment type="subcellular location">
    <subcellularLocation>
        <location evidence="8">Cell membrane</location>
        <topology evidence="8">Lipid-anchor</topology>
        <topology evidence="8">GPI-anchor</topology>
    </subcellularLocation>
</comment>